<comment type="function">
    <text evidence="1">Probable S-adenosyl-L-methionine-dependent methyltransferase.</text>
</comment>
<comment type="similarity">
    <text evidence="2">Belongs to the methyltransferase superfamily. RsmH family.</text>
</comment>
<comment type="caution">
    <text evidence="2">Could be the product of a pseudogene.</text>
</comment>
<organism>
    <name type="scientific">Homo sapiens</name>
    <name type="common">Human</name>
    <dbReference type="NCBI Taxonomy" id="9606"/>
    <lineage>
        <taxon>Eukaryota</taxon>
        <taxon>Metazoa</taxon>
        <taxon>Chordata</taxon>
        <taxon>Craniata</taxon>
        <taxon>Vertebrata</taxon>
        <taxon>Euteleostomi</taxon>
        <taxon>Mammalia</taxon>
        <taxon>Eutheria</taxon>
        <taxon>Euarchontoglires</taxon>
        <taxon>Primates</taxon>
        <taxon>Haplorrhini</taxon>
        <taxon>Catarrhini</taxon>
        <taxon>Hominidae</taxon>
        <taxon>Homo</taxon>
    </lineage>
</organism>
<gene>
    <name type="primary">METTL15P1</name>
    <name type="synonym">METT5D2</name>
</gene>
<sequence length="234" mass="26716">MLRYPYFCRMYKECLSCWLESGIPNLGVWPKRIHTTAEKYREYEAREQTDQTQVQELHRSQDRDFETMAKLHIPVMVDEVVHCLSPQKGQIFLDMTFGSGGHTKAILQKESDIVLYALDRDPTAYALAEHLSELYPKQIRAMLGQFSQAEALLMKAGVQPGTFDGVLMDLGCSSMQLDTPERGSSLRKDGPLDIRMDGGRNISSLCYLYTERLTTAIYLYCHQDFPGSSHICEQ</sequence>
<proteinExistence type="uncertain"/>
<protein>
    <recommendedName>
        <fullName>Putative methyltransferase-like protein 15P1</fullName>
        <ecNumber>2.1.1.-</ecNumber>
    </recommendedName>
    <alternativeName>
        <fullName>Methyltransferase 5 domain-containing protein 2</fullName>
    </alternativeName>
    <alternativeName>
        <fullName>Methyltransferase-like protein 15 pseudogene 1</fullName>
    </alternativeName>
</protein>
<keyword id="KW-0489">Methyltransferase</keyword>
<keyword id="KW-1185">Reference proteome</keyword>
<keyword id="KW-0949">S-adenosyl-L-methionine</keyword>
<keyword id="KW-0808">Transferase</keyword>
<evidence type="ECO:0000250" key="1"/>
<evidence type="ECO:0000305" key="2"/>
<dbReference type="EC" id="2.1.1.-"/>
<dbReference type="EMBL" id="AC106708">
    <property type="status" value="NOT_ANNOTATED_CDS"/>
    <property type="molecule type" value="Genomic_DNA"/>
</dbReference>
<dbReference type="EMBL" id="BF352768">
    <property type="status" value="NOT_ANNOTATED_CDS"/>
    <property type="molecule type" value="mRNA"/>
</dbReference>
<dbReference type="SMR" id="P0C7V9"/>
<dbReference type="iPTMnet" id="P0C7V9"/>
<dbReference type="PhosphoSitePlus" id="P0C7V9"/>
<dbReference type="BioMuta" id="HGNC:31926"/>
<dbReference type="jPOST" id="P0C7V9"/>
<dbReference type="MassIVE" id="P0C7V9"/>
<dbReference type="PeptideAtlas" id="P0C7V9"/>
<dbReference type="ProteomicsDB" id="52379"/>
<dbReference type="AGR" id="HGNC:31926"/>
<dbReference type="GeneCards" id="METTL15P1"/>
<dbReference type="HGNC" id="HGNC:31926">
    <property type="gene designation" value="METTL15P1"/>
</dbReference>
<dbReference type="neXtProt" id="NX_P0C7V9"/>
<dbReference type="InParanoid" id="P0C7V9"/>
<dbReference type="PAN-GO" id="P0C7V9">
    <property type="GO annotations" value="2 GO annotations based on evolutionary models"/>
</dbReference>
<dbReference type="PhylomeDB" id="P0C7V9"/>
<dbReference type="Pharos" id="P0C7V9">
    <property type="development level" value="Tdark"/>
</dbReference>
<dbReference type="Proteomes" id="UP000005640">
    <property type="component" value="Unplaced"/>
</dbReference>
<dbReference type="RNAct" id="P0C7V9">
    <property type="molecule type" value="protein"/>
</dbReference>
<dbReference type="GO" id="GO:0071424">
    <property type="term" value="F:rRNA (cytosine-N4-)-methyltransferase activity"/>
    <property type="evidence" value="ECO:0000318"/>
    <property type="project" value="GO_Central"/>
</dbReference>
<dbReference type="GO" id="GO:0070475">
    <property type="term" value="P:rRNA base methylation"/>
    <property type="evidence" value="ECO:0000318"/>
    <property type="project" value="GO_Central"/>
</dbReference>
<dbReference type="FunFam" id="3.40.50.150:FF:000226">
    <property type="entry name" value="probable methyltransferase-like protein 15 isoform X3"/>
    <property type="match status" value="1"/>
</dbReference>
<dbReference type="Gene3D" id="1.10.150.170">
    <property type="entry name" value="Putative methyltransferase TM0872, insert domain"/>
    <property type="match status" value="1"/>
</dbReference>
<dbReference type="Gene3D" id="3.40.50.150">
    <property type="entry name" value="Vaccinia Virus protein VP39"/>
    <property type="match status" value="1"/>
</dbReference>
<dbReference type="InterPro" id="IPR002903">
    <property type="entry name" value="RsmH"/>
</dbReference>
<dbReference type="InterPro" id="IPR023397">
    <property type="entry name" value="SAM-dep_MeTrfase_MraW_recog"/>
</dbReference>
<dbReference type="InterPro" id="IPR029063">
    <property type="entry name" value="SAM-dependent_MTases_sf"/>
</dbReference>
<dbReference type="PANTHER" id="PTHR11265:SF1">
    <property type="entry name" value="12S RRNA N4-METHYLCYTIDINE (M4C) METHYLTRANSFERASE-RELATED"/>
    <property type="match status" value="1"/>
</dbReference>
<dbReference type="PANTHER" id="PTHR11265">
    <property type="entry name" value="S-ADENOSYL-METHYLTRANSFERASE MRAW"/>
    <property type="match status" value="1"/>
</dbReference>
<dbReference type="Pfam" id="PF01795">
    <property type="entry name" value="Methyltransf_5"/>
    <property type="match status" value="1"/>
</dbReference>
<dbReference type="SUPFAM" id="SSF53335">
    <property type="entry name" value="S-adenosyl-L-methionine-dependent methyltransferases"/>
    <property type="match status" value="1"/>
</dbReference>
<name>ME15P_HUMAN</name>
<accession>P0C7V9</accession>
<reference key="1">
    <citation type="journal article" date="2006" name="Nature">
        <title>The DNA sequence, annotation and analysis of human chromosome 3.</title>
        <authorList>
            <person name="Muzny D.M."/>
            <person name="Scherer S.E."/>
            <person name="Kaul R."/>
            <person name="Wang J."/>
            <person name="Yu J."/>
            <person name="Sudbrak R."/>
            <person name="Buhay C.J."/>
            <person name="Chen R."/>
            <person name="Cree A."/>
            <person name="Ding Y."/>
            <person name="Dugan-Rocha S."/>
            <person name="Gill R."/>
            <person name="Gunaratne P."/>
            <person name="Harris R.A."/>
            <person name="Hawes A.C."/>
            <person name="Hernandez J."/>
            <person name="Hodgson A.V."/>
            <person name="Hume J."/>
            <person name="Jackson A."/>
            <person name="Khan Z.M."/>
            <person name="Kovar-Smith C."/>
            <person name="Lewis L.R."/>
            <person name="Lozado R.J."/>
            <person name="Metzker M.L."/>
            <person name="Milosavljevic A."/>
            <person name="Miner G.R."/>
            <person name="Morgan M.B."/>
            <person name="Nazareth L.V."/>
            <person name="Scott G."/>
            <person name="Sodergren E."/>
            <person name="Song X.-Z."/>
            <person name="Steffen D."/>
            <person name="Wei S."/>
            <person name="Wheeler D.A."/>
            <person name="Wright M.W."/>
            <person name="Worley K.C."/>
            <person name="Yuan Y."/>
            <person name="Zhang Z."/>
            <person name="Adams C.Q."/>
            <person name="Ansari-Lari M.A."/>
            <person name="Ayele M."/>
            <person name="Brown M.J."/>
            <person name="Chen G."/>
            <person name="Chen Z."/>
            <person name="Clendenning J."/>
            <person name="Clerc-Blankenburg K.P."/>
            <person name="Chen R."/>
            <person name="Chen Z."/>
            <person name="Davis C."/>
            <person name="Delgado O."/>
            <person name="Dinh H.H."/>
            <person name="Dong W."/>
            <person name="Draper H."/>
            <person name="Ernst S."/>
            <person name="Fu G."/>
            <person name="Gonzalez-Garay M.L."/>
            <person name="Garcia D.K."/>
            <person name="Gillett W."/>
            <person name="Gu J."/>
            <person name="Hao B."/>
            <person name="Haugen E."/>
            <person name="Havlak P."/>
            <person name="He X."/>
            <person name="Hennig S."/>
            <person name="Hu S."/>
            <person name="Huang W."/>
            <person name="Jackson L.R."/>
            <person name="Jacob L.S."/>
            <person name="Kelly S.H."/>
            <person name="Kube M."/>
            <person name="Levy R."/>
            <person name="Li Z."/>
            <person name="Liu B."/>
            <person name="Liu J."/>
            <person name="Liu W."/>
            <person name="Lu J."/>
            <person name="Maheshwari M."/>
            <person name="Nguyen B.-V."/>
            <person name="Okwuonu G.O."/>
            <person name="Palmeiri A."/>
            <person name="Pasternak S."/>
            <person name="Perez L.M."/>
            <person name="Phelps K.A."/>
            <person name="Plopper F.J."/>
            <person name="Qiang B."/>
            <person name="Raymond C."/>
            <person name="Rodriguez R."/>
            <person name="Saenphimmachak C."/>
            <person name="Santibanez J."/>
            <person name="Shen H."/>
            <person name="Shen Y."/>
            <person name="Subramanian S."/>
            <person name="Tabor P.E."/>
            <person name="Verduzco D."/>
            <person name="Waldron L."/>
            <person name="Wang J."/>
            <person name="Wang J."/>
            <person name="Wang Q."/>
            <person name="Williams G.A."/>
            <person name="Wong G.K.-S."/>
            <person name="Yao Z."/>
            <person name="Zhang J."/>
            <person name="Zhang X."/>
            <person name="Zhao G."/>
            <person name="Zhou J."/>
            <person name="Zhou Y."/>
            <person name="Nelson D."/>
            <person name="Lehrach H."/>
            <person name="Reinhardt R."/>
            <person name="Naylor S.L."/>
            <person name="Yang H."/>
            <person name="Olson M."/>
            <person name="Weinstock G."/>
            <person name="Gibbs R.A."/>
        </authorList>
    </citation>
    <scope>NUCLEOTIDE SEQUENCE [LARGE SCALE GENOMIC DNA]</scope>
</reference>
<reference key="2">
    <citation type="journal article" date="2000" name="Proc. Natl. Acad. Sci. U.S.A.">
        <title>Shotgun sequencing of the human transcriptome with ORF expressed sequence tags.</title>
        <authorList>
            <person name="Dias Neto E."/>
            <person name="Correa R.G."/>
            <person name="Verjovski-Almeida S."/>
            <person name="Briones M.R.S."/>
            <person name="Nagai M.A."/>
            <person name="da Silva W. Jr."/>
            <person name="Zago M.A."/>
            <person name="Bordin S."/>
            <person name="Costa F.F."/>
            <person name="Goldman G.H."/>
            <person name="Carvalho A.F."/>
            <person name="Matsukuma A."/>
            <person name="Baia G.S."/>
            <person name="Simpson D.H."/>
            <person name="Brunstein A."/>
            <person name="de Oliveira P.S.L."/>
            <person name="Bucher P."/>
            <person name="Jongeneel C.V."/>
            <person name="O'Hare M.J."/>
            <person name="Soares F."/>
            <person name="Brentani R.R."/>
            <person name="Reis L.F.L."/>
            <person name="de Souza S.J."/>
            <person name="Simpson A.J.G."/>
        </authorList>
    </citation>
    <scope>NUCLEOTIDE SEQUENCE [LARGE SCALE MRNA] OF 152-216</scope>
</reference>
<feature type="chain" id="PRO_0000344465" description="Putative methyltransferase-like protein 15P1">
    <location>
        <begin position="1"/>
        <end position="234"/>
    </location>
</feature>
<feature type="binding site" evidence="1">
    <location>
        <begin position="100"/>
        <end position="102"/>
    </location>
    <ligand>
        <name>S-adenosyl-L-methionine</name>
        <dbReference type="ChEBI" id="CHEBI:59789"/>
    </ligand>
</feature>
<feature type="binding site" evidence="1">
    <location>
        <position position="119"/>
    </location>
    <ligand>
        <name>S-adenosyl-L-methionine</name>
        <dbReference type="ChEBI" id="CHEBI:59789"/>
    </ligand>
</feature>
<feature type="binding site" evidence="1">
    <location>
        <position position="146"/>
    </location>
    <ligand>
        <name>S-adenosyl-L-methionine</name>
        <dbReference type="ChEBI" id="CHEBI:59789"/>
    </ligand>
</feature>
<feature type="binding site" evidence="1">
    <location>
        <position position="169"/>
    </location>
    <ligand>
        <name>S-adenosyl-L-methionine</name>
        <dbReference type="ChEBI" id="CHEBI:59789"/>
    </ligand>
</feature>
<feature type="binding site" evidence="1">
    <location>
        <position position="176"/>
    </location>
    <ligand>
        <name>S-adenosyl-L-methionine</name>
        <dbReference type="ChEBI" id="CHEBI:59789"/>
    </ligand>
</feature>